<comment type="function">
    <text evidence="11">Probable transcriptional regulator involved in developmental processes. May act as a transcriptional repressor (Potential).</text>
</comment>
<comment type="subunit">
    <text evidence="1">Interacts (via homeobox domain) with APBB1 (via PID domain 1).</text>
</comment>
<comment type="interaction">
    <interactant intactId="EBI-10687282">
        <id>Q9NRE2</id>
    </interactant>
    <interactant intactId="EBI-1642333">
        <id>Q9BYV9</id>
        <label>BACH2</label>
    </interactant>
    <organismsDiffer>false</organismsDiffer>
    <experiments>3</experiments>
</comment>
<comment type="interaction">
    <interactant intactId="EBI-10687282">
        <id>Q9NRE2</id>
    </interactant>
    <interactant intactId="EBI-10961624">
        <id>Q2TAC2-2</id>
        <label>CCDC57</label>
    </interactant>
    <organismsDiffer>false</organismsDiffer>
    <experiments>3</experiments>
</comment>
<comment type="interaction">
    <interactant intactId="EBI-10687282">
        <id>Q9NRE2</id>
    </interactant>
    <interactant intactId="EBI-347573">
        <id>A6NC98</id>
        <label>CCDC88B</label>
    </interactant>
    <organismsDiffer>false</organismsDiffer>
    <experiments>3</experiments>
</comment>
<comment type="interaction">
    <interactant intactId="EBI-10687282">
        <id>Q9NRE2</id>
    </interactant>
    <interactant intactId="EBI-947360">
        <id>Q8N137</id>
        <label>CNTROB</label>
    </interactant>
    <organismsDiffer>false</organismsDiffer>
    <experiments>3</experiments>
</comment>
<comment type="interaction">
    <interactant intactId="EBI-10687282">
        <id>Q9NRE2</id>
    </interactant>
    <interactant intactId="EBI-9091495">
        <id>Q96JB2-2</id>
        <label>COG3</label>
    </interactant>
    <organismsDiffer>false</organismsDiffer>
    <experiments>3</experiments>
</comment>
<comment type="interaction">
    <interactant intactId="EBI-10687282">
        <id>Q9NRE2</id>
    </interactant>
    <interactant intactId="EBI-11982645">
        <id>Q8N4Y2-3</id>
        <label>CRACR2B</label>
    </interactant>
    <organismsDiffer>false</organismsDiffer>
    <experiments>3</experiments>
</comment>
<comment type="interaction">
    <interactant intactId="EBI-10687282">
        <id>Q9NRE2</id>
    </interactant>
    <interactant intactId="EBI-947774">
        <id>O75420</id>
        <label>GIGYF1</label>
    </interactant>
    <organismsDiffer>false</organismsDiffer>
    <experiments>3</experiments>
</comment>
<comment type="interaction">
    <interactant intactId="EBI-10687282">
        <id>Q9NRE2</id>
    </interactant>
    <interactant intactId="EBI-618309">
        <id>Q08379</id>
        <label>GOLGA2</label>
    </interactant>
    <organismsDiffer>false</organismsDiffer>
    <experiments>3</experiments>
</comment>
<comment type="interaction">
    <interactant intactId="EBI-10687282">
        <id>Q9NRE2</id>
    </interactant>
    <interactant intactId="EBI-717919">
        <id>Q4V328</id>
        <label>GRIPAP1</label>
    </interactant>
    <organismsDiffer>false</organismsDiffer>
    <experiments>3</experiments>
</comment>
<comment type="interaction">
    <interactant intactId="EBI-10687282">
        <id>Q9NRE2</id>
    </interactant>
    <interactant intactId="EBI-307531">
        <id>P23508</id>
        <label>MCC</label>
    </interactant>
    <organismsDiffer>false</organismsDiffer>
    <experiments>3</experiments>
</comment>
<comment type="interaction">
    <interactant intactId="EBI-10687282">
        <id>Q9NRE2</id>
    </interactant>
    <interactant intactId="EBI-946080">
        <id>Q9BSU1</id>
        <label>PHAF1</label>
    </interactant>
    <organismsDiffer>false</organismsDiffer>
    <experiments>3</experiments>
</comment>
<comment type="interaction">
    <interactant intactId="EBI-10687282">
        <id>Q9NRE2</id>
    </interactant>
    <interactant intactId="EBI-14066006">
        <id>Q4G0R1</id>
        <label>PIBF1</label>
    </interactant>
    <organismsDiffer>false</organismsDiffer>
    <experiments>3</experiments>
</comment>
<comment type="interaction">
    <interactant intactId="EBI-10687282">
        <id>Q9NRE2</id>
    </interactant>
    <interactant intactId="EBI-302345">
        <id>Q8ND90</id>
        <label>PNMA1</label>
    </interactant>
    <organismsDiffer>false</organismsDiffer>
    <experiments>3</experiments>
</comment>
<comment type="interaction">
    <interactant intactId="EBI-10687282">
        <id>Q9NRE2</id>
    </interactant>
    <interactant intactId="EBI-447043">
        <id>Q15276</id>
        <label>RABEP1</label>
    </interactant>
    <organismsDiffer>false</organismsDiffer>
    <experiments>3</experiments>
</comment>
<comment type="interaction">
    <interactant intactId="EBI-10687282">
        <id>Q9NRE2</id>
    </interactant>
    <interactant intactId="EBI-726876">
        <id>Q6NUQ1</id>
        <label>RINT1</label>
    </interactant>
    <organismsDiffer>false</organismsDiffer>
    <experiments>3</experiments>
</comment>
<comment type="interaction">
    <interactant intactId="EBI-10687282">
        <id>Q9NRE2</id>
    </interactant>
    <interactant intactId="EBI-375617">
        <id>P02549</id>
        <label>SPTA1</label>
    </interactant>
    <organismsDiffer>false</organismsDiffer>
    <experiments>3</experiments>
</comment>
<comment type="interaction">
    <interactant intactId="EBI-10687282">
        <id>Q9NRE2</id>
    </interactant>
    <interactant intactId="EBI-1105213">
        <id>Q9UBB9</id>
        <label>TFIP11</label>
    </interactant>
    <organismsDiffer>false</organismsDiffer>
    <experiments>3</experiments>
</comment>
<comment type="interaction">
    <interactant intactId="EBI-10687282">
        <id>Q9NRE2</id>
    </interactant>
    <interactant intactId="EBI-359224">
        <id>Q13077</id>
        <label>TRAF1</label>
    </interactant>
    <organismsDiffer>false</organismsDiffer>
    <experiments>3</experiments>
</comment>
<comment type="interaction">
    <interactant intactId="EBI-10687282">
        <id>Q9NRE2</id>
    </interactant>
    <interactant intactId="EBI-355744">
        <id>Q12933</id>
        <label>TRAF2</label>
    </interactant>
    <organismsDiffer>false</organismsDiffer>
    <experiments>3</experiments>
</comment>
<comment type="subcellular location">
    <subcellularLocation>
        <location evidence="11">Nucleus</location>
    </subcellularLocation>
</comment>
<comment type="alternative products">
    <event type="alternative splicing"/>
    <isoform>
        <id>Q9NRE2-1</id>
        <name>1</name>
        <sequence type="displayed"/>
    </isoform>
    <isoform>
        <id>Q9NRE2-2</id>
        <name>2</name>
        <sequence type="described" ref="VSP_046071"/>
    </isoform>
</comment>
<comment type="tissue specificity">
    <text evidence="9">Expressed in brain; strongly reduced in post-mortem elderly subjects with Alzheimer disease.</text>
</comment>
<comment type="PTM">
    <text evidence="7">Sumoylated.</text>
</comment>
<comment type="similarity">
    <text evidence="11">Belongs to the teashirt C2H2-type zinc-finger protein family.</text>
</comment>
<comment type="sequence caution" evidence="11">
    <conflict type="miscellaneous discrepancy">
        <sequence resource="EMBL-CDS" id="AAF76850"/>
    </conflict>
    <text>The sequence differs from that shown due translation of a 3'-UTR region.</text>
</comment>
<feature type="chain" id="PRO_0000047064" description="Teashirt homolog 2">
    <location>
        <begin position="1"/>
        <end position="1034"/>
    </location>
</feature>
<feature type="zinc finger region" description="C2H2-type 1" evidence="4">
    <location>
        <begin position="215"/>
        <end position="239"/>
    </location>
</feature>
<feature type="zinc finger region" description="C2H2-type 2" evidence="4">
    <location>
        <begin position="275"/>
        <end position="299"/>
    </location>
</feature>
<feature type="zinc finger region" description="C2H2-type 3; atypical" evidence="4">
    <location>
        <begin position="380"/>
        <end position="404"/>
    </location>
</feature>
<feature type="DNA-binding region" description="Homeobox; atypical">
    <location>
        <begin position="841"/>
        <end position="911"/>
    </location>
</feature>
<feature type="zinc finger region" description="C2H2-type 4" evidence="4">
    <location>
        <begin position="926"/>
        <end position="948"/>
    </location>
</feature>
<feature type="zinc finger region" description="C2H2-type 5" evidence="4">
    <location>
        <begin position="994"/>
        <end position="1017"/>
    </location>
</feature>
<feature type="region of interest" description="Disordered" evidence="5">
    <location>
        <begin position="1"/>
        <end position="90"/>
    </location>
</feature>
<feature type="region of interest" description="Disordered" evidence="5">
    <location>
        <begin position="239"/>
        <end position="265"/>
    </location>
</feature>
<feature type="region of interest" description="Disordered" evidence="5">
    <location>
        <begin position="432"/>
        <end position="496"/>
    </location>
</feature>
<feature type="region of interest" description="Disordered" evidence="5">
    <location>
        <begin position="598"/>
        <end position="676"/>
    </location>
</feature>
<feature type="region of interest" description="Disordered" evidence="5">
    <location>
        <begin position="763"/>
        <end position="789"/>
    </location>
</feature>
<feature type="region of interest" description="Disordered" evidence="5">
    <location>
        <begin position="1014"/>
        <end position="1034"/>
    </location>
</feature>
<feature type="coiled-coil region" evidence="3">
    <location>
        <begin position="13"/>
        <end position="38"/>
    </location>
</feature>
<feature type="compositionally biased region" description="Acidic residues" evidence="5">
    <location>
        <begin position="21"/>
        <end position="36"/>
    </location>
</feature>
<feature type="compositionally biased region" description="Polar residues" evidence="5">
    <location>
        <begin position="65"/>
        <end position="90"/>
    </location>
</feature>
<feature type="compositionally biased region" description="Polar residues" evidence="5">
    <location>
        <begin position="432"/>
        <end position="455"/>
    </location>
</feature>
<feature type="compositionally biased region" description="Basic and acidic residues" evidence="5">
    <location>
        <begin position="459"/>
        <end position="482"/>
    </location>
</feature>
<feature type="compositionally biased region" description="Basic and acidic residues" evidence="5">
    <location>
        <begin position="600"/>
        <end position="668"/>
    </location>
</feature>
<feature type="modified residue" description="Phosphoserine" evidence="2">
    <location>
        <position position="980"/>
    </location>
</feature>
<feature type="cross-link" description="Glycyl lysine isopeptide (Lys-Gly) (interchain with G-Cter in SUMO2)" evidence="13">
    <location>
        <position position="188"/>
    </location>
</feature>
<feature type="cross-link" description="Glycyl lysine isopeptide (Lys-Gly) (interchain with G-Cter in SUMO2)" evidence="13">
    <location>
        <position position="306"/>
    </location>
</feature>
<feature type="cross-link" description="Glycyl lysine isopeptide (Lys-Gly) (interchain with G-Cter in SUMO2)" evidence="13">
    <location>
        <position position="315"/>
    </location>
</feature>
<feature type="cross-link" description="Glycyl lysine isopeptide (Lys-Gly) (interchain with G-Cter in SUMO2)" evidence="13">
    <location>
        <position position="417"/>
    </location>
</feature>
<feature type="cross-link" description="Glycyl lysine isopeptide (Lys-Gly) (interchain with G-Cter in SUMO2)" evidence="13">
    <location>
        <position position="461"/>
    </location>
</feature>
<feature type="cross-link" description="Glycyl lysine isopeptide (Lys-Gly) (interchain with G-Cter in SUMO2)" evidence="12 13">
    <location>
        <position position="480"/>
    </location>
</feature>
<feature type="cross-link" description="Glycyl lysine isopeptide (Lys-Gly) (interchain with G-Cter in SUMO2)" evidence="13">
    <location>
        <position position="497"/>
    </location>
</feature>
<feature type="cross-link" description="Glycyl lysine isopeptide (Lys-Gly) (interchain with G-Cter in SUMO2)" evidence="13">
    <location>
        <position position="601"/>
    </location>
</feature>
<feature type="cross-link" description="Glycyl lysine isopeptide (Lys-Gly) (interchain with G-Cter in SUMO2)" evidence="13">
    <location>
        <position position="652"/>
    </location>
</feature>
<feature type="cross-link" description="Glycyl lysine isopeptide (Lys-Gly) (interchain with G-Cter in SUMO2)" evidence="13">
    <location>
        <position position="800"/>
    </location>
</feature>
<feature type="cross-link" description="Glycyl lysine isopeptide (Lys-Gly) (interchain with G-Cter in SUMO2)" evidence="13">
    <location>
        <position position="820"/>
    </location>
</feature>
<feature type="cross-link" description="Glycyl lysine isopeptide (Lys-Gly) (interchain with G-Cter in SUMO2)" evidence="13">
    <location>
        <position position="966"/>
    </location>
</feature>
<feature type="splice variant" id="VSP_046071" description="In isoform 2." evidence="10">
    <original>MPRRKQQAPKRAA</original>
    <variation>MMAAALLHYT</variation>
    <location>
        <begin position="1"/>
        <end position="13"/>
    </location>
</feature>
<feature type="sequence variant" id="VAR_026679" description="In dbSNP:rs739869." evidence="6 8">
    <original>R</original>
    <variation>S</variation>
    <location>
        <position position="113"/>
    </location>
</feature>
<feature type="sequence variant" id="VAR_026680" description="In dbSNP:rs6097319.">
    <original>A</original>
    <variation>T</variation>
    <location>
        <position position="681"/>
    </location>
</feature>
<feature type="sequence conflict" description="In Ref. 2; CAE45871." evidence="11" ref="2">
    <original>Y</original>
    <variation>C</variation>
    <location>
        <position position="198"/>
    </location>
</feature>
<feature type="sequence conflict" description="In Ref. 2; CAE45871." evidence="11" ref="2">
    <original>A</original>
    <variation>T</variation>
    <location>
        <position position="223"/>
    </location>
</feature>
<feature type="sequence conflict" description="In Ref. 1; BAC03610." evidence="11" ref="1">
    <original>Q</original>
    <variation>R</variation>
    <location>
        <position position="563"/>
    </location>
</feature>
<feature type="sequence conflict" description="In Ref. 2; CAE45871." evidence="11" ref="2">
    <original>L</original>
    <variation>P</variation>
    <location>
        <position position="916"/>
    </location>
</feature>
<feature type="sequence conflict" description="In Ref. 1; BAH13747." evidence="11" ref="1">
    <original>T</original>
    <variation>A</variation>
    <location>
        <position position="983"/>
    </location>
</feature>
<proteinExistence type="evidence at protein level"/>
<reference key="1">
    <citation type="journal article" date="2004" name="Nat. Genet.">
        <title>Complete sequencing and characterization of 21,243 full-length human cDNAs.</title>
        <authorList>
            <person name="Ota T."/>
            <person name="Suzuki Y."/>
            <person name="Nishikawa T."/>
            <person name="Otsuki T."/>
            <person name="Sugiyama T."/>
            <person name="Irie R."/>
            <person name="Wakamatsu A."/>
            <person name="Hayashi K."/>
            <person name="Sato H."/>
            <person name="Nagai K."/>
            <person name="Kimura K."/>
            <person name="Makita H."/>
            <person name="Sekine M."/>
            <person name="Obayashi M."/>
            <person name="Nishi T."/>
            <person name="Shibahara T."/>
            <person name="Tanaka T."/>
            <person name="Ishii S."/>
            <person name="Yamamoto J."/>
            <person name="Saito K."/>
            <person name="Kawai Y."/>
            <person name="Isono Y."/>
            <person name="Nakamura Y."/>
            <person name="Nagahari K."/>
            <person name="Murakami K."/>
            <person name="Yasuda T."/>
            <person name="Iwayanagi T."/>
            <person name="Wagatsuma M."/>
            <person name="Shiratori A."/>
            <person name="Sudo H."/>
            <person name="Hosoiri T."/>
            <person name="Kaku Y."/>
            <person name="Kodaira H."/>
            <person name="Kondo H."/>
            <person name="Sugawara M."/>
            <person name="Takahashi M."/>
            <person name="Kanda K."/>
            <person name="Yokoi T."/>
            <person name="Furuya T."/>
            <person name="Kikkawa E."/>
            <person name="Omura Y."/>
            <person name="Abe K."/>
            <person name="Kamihara K."/>
            <person name="Katsuta N."/>
            <person name="Sato K."/>
            <person name="Tanikawa M."/>
            <person name="Yamazaki M."/>
            <person name="Ninomiya K."/>
            <person name="Ishibashi T."/>
            <person name="Yamashita H."/>
            <person name="Murakawa K."/>
            <person name="Fujimori K."/>
            <person name="Tanai H."/>
            <person name="Kimata M."/>
            <person name="Watanabe M."/>
            <person name="Hiraoka S."/>
            <person name="Chiba Y."/>
            <person name="Ishida S."/>
            <person name="Ono Y."/>
            <person name="Takiguchi S."/>
            <person name="Watanabe S."/>
            <person name="Yosida M."/>
            <person name="Hotuta T."/>
            <person name="Kusano J."/>
            <person name="Kanehori K."/>
            <person name="Takahashi-Fujii A."/>
            <person name="Hara H."/>
            <person name="Tanase T.-O."/>
            <person name="Nomura Y."/>
            <person name="Togiya S."/>
            <person name="Komai F."/>
            <person name="Hara R."/>
            <person name="Takeuchi K."/>
            <person name="Arita M."/>
            <person name="Imose N."/>
            <person name="Musashino K."/>
            <person name="Yuuki H."/>
            <person name="Oshima A."/>
            <person name="Sasaki N."/>
            <person name="Aotsuka S."/>
            <person name="Yoshikawa Y."/>
            <person name="Matsunawa H."/>
            <person name="Ichihara T."/>
            <person name="Shiohata N."/>
            <person name="Sano S."/>
            <person name="Moriya S."/>
            <person name="Momiyama H."/>
            <person name="Satoh N."/>
            <person name="Takami S."/>
            <person name="Terashima Y."/>
            <person name="Suzuki O."/>
            <person name="Nakagawa S."/>
            <person name="Senoh A."/>
            <person name="Mizoguchi H."/>
            <person name="Goto Y."/>
            <person name="Shimizu F."/>
            <person name="Wakebe H."/>
            <person name="Hishigaki H."/>
            <person name="Watanabe T."/>
            <person name="Sugiyama A."/>
            <person name="Takemoto M."/>
            <person name="Kawakami B."/>
            <person name="Yamazaki M."/>
            <person name="Watanabe K."/>
            <person name="Kumagai A."/>
            <person name="Itakura S."/>
            <person name="Fukuzumi Y."/>
            <person name="Fujimori Y."/>
            <person name="Komiyama M."/>
            <person name="Tashiro H."/>
            <person name="Tanigami A."/>
            <person name="Fujiwara T."/>
            <person name="Ono T."/>
            <person name="Yamada K."/>
            <person name="Fujii Y."/>
            <person name="Ozaki K."/>
            <person name="Hirao M."/>
            <person name="Ohmori Y."/>
            <person name="Kawabata A."/>
            <person name="Hikiji T."/>
            <person name="Kobatake N."/>
            <person name="Inagaki H."/>
            <person name="Ikema Y."/>
            <person name="Okamoto S."/>
            <person name="Okitani R."/>
            <person name="Kawakami T."/>
            <person name="Noguchi S."/>
            <person name="Itoh T."/>
            <person name="Shigeta K."/>
            <person name="Senba T."/>
            <person name="Matsumura K."/>
            <person name="Nakajima Y."/>
            <person name="Mizuno T."/>
            <person name="Morinaga M."/>
            <person name="Sasaki M."/>
            <person name="Togashi T."/>
            <person name="Oyama M."/>
            <person name="Hata H."/>
            <person name="Watanabe M."/>
            <person name="Komatsu T."/>
            <person name="Mizushima-Sugano J."/>
            <person name="Satoh T."/>
            <person name="Shirai Y."/>
            <person name="Takahashi Y."/>
            <person name="Nakagawa K."/>
            <person name="Okumura K."/>
            <person name="Nagase T."/>
            <person name="Nomura N."/>
            <person name="Kikuchi H."/>
            <person name="Masuho Y."/>
            <person name="Yamashita R."/>
            <person name="Nakai K."/>
            <person name="Yada T."/>
            <person name="Nakamura Y."/>
            <person name="Ohara O."/>
            <person name="Isogai T."/>
            <person name="Sugano S."/>
        </authorList>
    </citation>
    <scope>NUCLEOTIDE SEQUENCE [LARGE SCALE MRNA] (ISOFORMS 1 AND 2)</scope>
    <scope>VARIANT SER-113</scope>
    <source>
        <tissue>Testis</tissue>
        <tissue>Tongue</tissue>
    </source>
</reference>
<reference key="2">
    <citation type="journal article" date="2007" name="BMC Genomics">
        <title>The full-ORF clone resource of the German cDNA consortium.</title>
        <authorList>
            <person name="Bechtel S."/>
            <person name="Rosenfelder H."/>
            <person name="Duda A."/>
            <person name="Schmidt C.P."/>
            <person name="Ernst U."/>
            <person name="Wellenreuther R."/>
            <person name="Mehrle A."/>
            <person name="Schuster C."/>
            <person name="Bahr A."/>
            <person name="Bloecker H."/>
            <person name="Heubner D."/>
            <person name="Hoerlein A."/>
            <person name="Michel G."/>
            <person name="Wedler H."/>
            <person name="Koehrer K."/>
            <person name="Ottenwaelder B."/>
            <person name="Poustka A."/>
            <person name="Wiemann S."/>
            <person name="Schupp I."/>
        </authorList>
    </citation>
    <scope>NUCLEOTIDE SEQUENCE [LARGE SCALE MRNA] (ISOFORM 1)</scope>
    <scope>VARIANT SER-113</scope>
    <source>
        <tissue>Uterus</tissue>
    </source>
</reference>
<reference key="3">
    <citation type="journal article" date="2001" name="Nature">
        <title>The DNA sequence and comparative analysis of human chromosome 20.</title>
        <authorList>
            <person name="Deloukas P."/>
            <person name="Matthews L.H."/>
            <person name="Ashurst J.L."/>
            <person name="Burton J."/>
            <person name="Gilbert J.G.R."/>
            <person name="Jones M."/>
            <person name="Stavrides G."/>
            <person name="Almeida J.P."/>
            <person name="Babbage A.K."/>
            <person name="Bagguley C.L."/>
            <person name="Bailey J."/>
            <person name="Barlow K.F."/>
            <person name="Bates K.N."/>
            <person name="Beard L.M."/>
            <person name="Beare D.M."/>
            <person name="Beasley O.P."/>
            <person name="Bird C.P."/>
            <person name="Blakey S.E."/>
            <person name="Bridgeman A.M."/>
            <person name="Brown A.J."/>
            <person name="Buck D."/>
            <person name="Burrill W.D."/>
            <person name="Butler A.P."/>
            <person name="Carder C."/>
            <person name="Carter N.P."/>
            <person name="Chapman J.C."/>
            <person name="Clamp M."/>
            <person name="Clark G."/>
            <person name="Clark L.N."/>
            <person name="Clark S.Y."/>
            <person name="Clee C.M."/>
            <person name="Clegg S."/>
            <person name="Cobley V.E."/>
            <person name="Collier R.E."/>
            <person name="Connor R.E."/>
            <person name="Corby N.R."/>
            <person name="Coulson A."/>
            <person name="Coville G.J."/>
            <person name="Deadman R."/>
            <person name="Dhami P.D."/>
            <person name="Dunn M."/>
            <person name="Ellington A.G."/>
            <person name="Frankland J.A."/>
            <person name="Fraser A."/>
            <person name="French L."/>
            <person name="Garner P."/>
            <person name="Grafham D.V."/>
            <person name="Griffiths C."/>
            <person name="Griffiths M.N.D."/>
            <person name="Gwilliam R."/>
            <person name="Hall R.E."/>
            <person name="Hammond S."/>
            <person name="Harley J.L."/>
            <person name="Heath P.D."/>
            <person name="Ho S."/>
            <person name="Holden J.L."/>
            <person name="Howden P.J."/>
            <person name="Huckle E."/>
            <person name="Hunt A.R."/>
            <person name="Hunt S.E."/>
            <person name="Jekosch K."/>
            <person name="Johnson C.M."/>
            <person name="Johnson D."/>
            <person name="Kay M.P."/>
            <person name="Kimberley A.M."/>
            <person name="King A."/>
            <person name="Knights A."/>
            <person name="Laird G.K."/>
            <person name="Lawlor S."/>
            <person name="Lehvaeslaiho M.H."/>
            <person name="Leversha M.A."/>
            <person name="Lloyd C."/>
            <person name="Lloyd D.M."/>
            <person name="Lovell J.D."/>
            <person name="Marsh V.L."/>
            <person name="Martin S.L."/>
            <person name="McConnachie L.J."/>
            <person name="McLay K."/>
            <person name="McMurray A.A."/>
            <person name="Milne S.A."/>
            <person name="Mistry D."/>
            <person name="Moore M.J.F."/>
            <person name="Mullikin J.C."/>
            <person name="Nickerson T."/>
            <person name="Oliver K."/>
            <person name="Parker A."/>
            <person name="Patel R."/>
            <person name="Pearce T.A.V."/>
            <person name="Peck A.I."/>
            <person name="Phillimore B.J.C.T."/>
            <person name="Prathalingam S.R."/>
            <person name="Plumb R.W."/>
            <person name="Ramsay H."/>
            <person name="Rice C.M."/>
            <person name="Ross M.T."/>
            <person name="Scott C.E."/>
            <person name="Sehra H.K."/>
            <person name="Shownkeen R."/>
            <person name="Sims S."/>
            <person name="Skuce C.D."/>
            <person name="Smith M.L."/>
            <person name="Soderlund C."/>
            <person name="Steward C.A."/>
            <person name="Sulston J.E."/>
            <person name="Swann R.M."/>
            <person name="Sycamore N."/>
            <person name="Taylor R."/>
            <person name="Tee L."/>
            <person name="Thomas D.W."/>
            <person name="Thorpe A."/>
            <person name="Tracey A."/>
            <person name="Tromans A.C."/>
            <person name="Vaudin M."/>
            <person name="Wall M."/>
            <person name="Wallis J.M."/>
            <person name="Whitehead S.L."/>
            <person name="Whittaker P."/>
            <person name="Willey D.L."/>
            <person name="Williams L."/>
            <person name="Williams S.A."/>
            <person name="Wilming L."/>
            <person name="Wray P.W."/>
            <person name="Hubbard T."/>
            <person name="Durbin R.M."/>
            <person name="Bentley D.R."/>
            <person name="Beck S."/>
            <person name="Rogers J."/>
        </authorList>
    </citation>
    <scope>NUCLEOTIDE SEQUENCE [LARGE SCALE GENOMIC DNA]</scope>
</reference>
<reference key="4">
    <citation type="submission" date="2000-01" db="EMBL/GenBank/DDBJ databases">
        <authorList>
            <person name="Yue W."/>
            <person name="Li C."/>
            <person name="Sun L."/>
        </authorList>
    </citation>
    <scope>PARTIAL NUCLEOTIDE SEQUENCE [MRNA]</scope>
    <source>
        <tissue>Ovarian carcinoma</tissue>
    </source>
</reference>
<reference key="5">
    <citation type="journal article" date="2005" name="J. Biol. Chem.">
        <title>Systematic identification and analysis of mammalian small ubiquitin-like modifier substrates.</title>
        <authorList>
            <person name="Gocke C.B."/>
            <person name="Yu H."/>
            <person name="Kang J."/>
        </authorList>
    </citation>
    <scope>SUMOYLATION</scope>
</reference>
<reference key="6">
    <citation type="journal article" date="2009" name="PLoS ONE">
        <title>FE65 binds Teashirt, inhibiting expression of the primate-specific caspase-4.</title>
        <authorList>
            <person name="Kajiwara Y."/>
            <person name="Akram A."/>
            <person name="Katsel P."/>
            <person name="Haroutunian V."/>
            <person name="Schmeidler J."/>
            <person name="Beecham G."/>
            <person name="Haines J.L."/>
            <person name="Pericak-Vance M.A."/>
            <person name="Buxbaum J.D."/>
        </authorList>
    </citation>
    <scope>TISSUE SPECIFICITY</scope>
</reference>
<reference key="7">
    <citation type="journal article" date="2010" name="Nephrol. Dial. Transplant.">
        <title>Analysis of TSHZ2 and TSHZ3 genes in congenital pelvi-ureteric junction obstruction.</title>
        <authorList>
            <person name="Jenkins D."/>
            <person name="Caubit X."/>
            <person name="Dimovski A."/>
            <person name="Matevska N."/>
            <person name="Lye C.M."/>
            <person name="Cabuk F."/>
            <person name="Gucev Z."/>
            <person name="Tasic V."/>
            <person name="Fasano L."/>
            <person name="Woolf A.S."/>
        </authorList>
    </citation>
    <scope>DEVELOPMENTAL STAGE</scope>
</reference>
<reference key="8">
    <citation type="journal article" date="2014" name="Nat. Struct. Mol. Biol.">
        <title>Uncovering global SUMOylation signaling networks in a site-specific manner.</title>
        <authorList>
            <person name="Hendriks I.A."/>
            <person name="D'Souza R.C."/>
            <person name="Yang B."/>
            <person name="Verlaan-de Vries M."/>
            <person name="Mann M."/>
            <person name="Vertegaal A.C."/>
        </authorList>
    </citation>
    <scope>SUMOYLATION [LARGE SCALE ANALYSIS] AT LYS-480</scope>
    <scope>IDENTIFICATION BY MASS SPECTROMETRY [LARGE SCALE ANALYSIS]</scope>
</reference>
<reference key="9">
    <citation type="journal article" date="2017" name="Nat. Struct. Mol. Biol.">
        <title>Site-specific mapping of the human SUMO proteome reveals co-modification with phosphorylation.</title>
        <authorList>
            <person name="Hendriks I.A."/>
            <person name="Lyon D."/>
            <person name="Young C."/>
            <person name="Jensen L.J."/>
            <person name="Vertegaal A.C."/>
            <person name="Nielsen M.L."/>
        </authorList>
    </citation>
    <scope>SUMOYLATION [LARGE SCALE ANALYSIS] AT LYS-188; LYS-306; LYS-315; LYS-417; LYS-461; LYS-480; LYS-497; LYS-601; LYS-652; LYS-800; LYS-820 AND LYS-966</scope>
    <scope>IDENTIFICATION BY MASS SPECTROMETRY [LARGE SCALE ANALYSIS]</scope>
</reference>
<accession>Q9NRE2</accession>
<accession>B7Z7W1</accession>
<accession>J3KNQ0</accession>
<accession>Q4VXM4</accession>
<accession>Q6N003</accession>
<accession>Q8N260</accession>
<dbReference type="EMBL" id="AK091206">
    <property type="protein sequence ID" value="BAC03610.1"/>
    <property type="molecule type" value="mRNA"/>
</dbReference>
<dbReference type="EMBL" id="AK302570">
    <property type="protein sequence ID" value="BAH13747.1"/>
    <property type="molecule type" value="mRNA"/>
</dbReference>
<dbReference type="EMBL" id="BX640770">
    <property type="protein sequence ID" value="CAE45871.1"/>
    <property type="molecule type" value="mRNA"/>
</dbReference>
<dbReference type="EMBL" id="AL121902">
    <property type="status" value="NOT_ANNOTATED_CDS"/>
    <property type="molecule type" value="Genomic_DNA"/>
</dbReference>
<dbReference type="EMBL" id="BX276189">
    <property type="status" value="NOT_ANNOTATED_CDS"/>
    <property type="molecule type" value="Genomic_DNA"/>
</dbReference>
<dbReference type="EMBL" id="AL050316">
    <property type="status" value="NOT_ANNOTATED_CDS"/>
    <property type="molecule type" value="Genomic_DNA"/>
</dbReference>
<dbReference type="EMBL" id="AL109930">
    <property type="status" value="NOT_ANNOTATED_CDS"/>
    <property type="molecule type" value="Genomic_DNA"/>
</dbReference>
<dbReference type="EMBL" id="AL354772">
    <property type="status" value="NOT_ANNOTATED_CDS"/>
    <property type="molecule type" value="Genomic_DNA"/>
</dbReference>
<dbReference type="EMBL" id="AL354993">
    <property type="status" value="NOT_ANNOTATED_CDS"/>
    <property type="molecule type" value="Genomic_DNA"/>
</dbReference>
<dbReference type="EMBL" id="AL391097">
    <property type="status" value="NOT_ANNOTATED_CDS"/>
    <property type="molecule type" value="Genomic_DNA"/>
</dbReference>
<dbReference type="EMBL" id="AF230201">
    <property type="protein sequence ID" value="AAF76850.1"/>
    <property type="status" value="ALT_SEQ"/>
    <property type="molecule type" value="mRNA"/>
</dbReference>
<dbReference type="CCDS" id="CCDS33490.1">
    <molecule id="Q9NRE2-1"/>
</dbReference>
<dbReference type="CCDS" id="CCDS54474.1">
    <molecule id="Q9NRE2-2"/>
</dbReference>
<dbReference type="RefSeq" id="NP_001180350.1">
    <molecule id="Q9NRE2-2"/>
    <property type="nucleotide sequence ID" value="NM_001193421.2"/>
</dbReference>
<dbReference type="RefSeq" id="NP_775756.3">
    <molecule id="Q9NRE2-1"/>
    <property type="nucleotide sequence ID" value="NM_173485.5"/>
</dbReference>
<dbReference type="RefSeq" id="XP_016883129.1">
    <property type="nucleotide sequence ID" value="XM_017027640.1"/>
</dbReference>
<dbReference type="RefSeq" id="XP_047295829.1">
    <molecule id="Q9NRE2-1"/>
    <property type="nucleotide sequence ID" value="XM_047439873.1"/>
</dbReference>
<dbReference type="RefSeq" id="XP_047295830.1">
    <molecule id="Q9NRE2-1"/>
    <property type="nucleotide sequence ID" value="XM_047439874.1"/>
</dbReference>
<dbReference type="RefSeq" id="XP_047295831.1">
    <molecule id="Q9NRE2-1"/>
    <property type="nucleotide sequence ID" value="XM_047439875.1"/>
</dbReference>
<dbReference type="RefSeq" id="XP_047295832.1">
    <molecule id="Q9NRE2-1"/>
    <property type="nucleotide sequence ID" value="XM_047439876.1"/>
</dbReference>
<dbReference type="RefSeq" id="XP_047295833.1">
    <molecule id="Q9NRE2-1"/>
    <property type="nucleotide sequence ID" value="XM_047439877.1"/>
</dbReference>
<dbReference type="RefSeq" id="XP_054178919.1">
    <molecule id="Q9NRE2-1"/>
    <property type="nucleotide sequence ID" value="XM_054322944.1"/>
</dbReference>
<dbReference type="RefSeq" id="XP_054178920.1">
    <molecule id="Q9NRE2-1"/>
    <property type="nucleotide sequence ID" value="XM_054322945.1"/>
</dbReference>
<dbReference type="RefSeq" id="XP_054178921.1">
    <molecule id="Q9NRE2-1"/>
    <property type="nucleotide sequence ID" value="XM_054322946.1"/>
</dbReference>
<dbReference type="RefSeq" id="XP_054178922.1">
    <molecule id="Q9NRE2-1"/>
    <property type="nucleotide sequence ID" value="XM_054322947.1"/>
</dbReference>
<dbReference type="RefSeq" id="XP_054178923.1">
    <molecule id="Q9NRE2-1"/>
    <property type="nucleotide sequence ID" value="XM_054322948.1"/>
</dbReference>
<dbReference type="BioGRID" id="126131">
    <property type="interactions" value="36"/>
</dbReference>
<dbReference type="FunCoup" id="Q9NRE2">
    <property type="interactions" value="835"/>
</dbReference>
<dbReference type="IntAct" id="Q9NRE2">
    <property type="interactions" value="28"/>
</dbReference>
<dbReference type="STRING" id="9606.ENSP00000360552"/>
<dbReference type="GlyGen" id="Q9NRE2">
    <property type="glycosylation" value="2 sites, 1 O-linked glycan (2 sites)"/>
</dbReference>
<dbReference type="iPTMnet" id="Q9NRE2"/>
<dbReference type="PhosphoSitePlus" id="Q9NRE2"/>
<dbReference type="BioMuta" id="TSHZ2"/>
<dbReference type="DMDM" id="108935911"/>
<dbReference type="jPOST" id="Q9NRE2"/>
<dbReference type="MassIVE" id="Q9NRE2"/>
<dbReference type="PaxDb" id="9606-ENSP00000360552"/>
<dbReference type="PeptideAtlas" id="Q9NRE2"/>
<dbReference type="ProteomicsDB" id="82344">
    <molecule id="Q9NRE2-1"/>
</dbReference>
<dbReference type="Pumba" id="Q9NRE2"/>
<dbReference type="Antibodypedia" id="52541">
    <property type="antibodies" value="117 antibodies from 28 providers"/>
</dbReference>
<dbReference type="DNASU" id="128553"/>
<dbReference type="Ensembl" id="ENST00000371497.10">
    <molecule id="Q9NRE2-1"/>
    <property type="protein sequence ID" value="ENSP00000360552.3"/>
    <property type="gene ID" value="ENSG00000182463.17"/>
</dbReference>
<dbReference type="Ensembl" id="ENST00000603338.2">
    <molecule id="Q9NRE2-2"/>
    <property type="protein sequence ID" value="ENSP00000475114.1"/>
    <property type="gene ID" value="ENSG00000182463.17"/>
</dbReference>
<dbReference type="GeneID" id="128553"/>
<dbReference type="KEGG" id="hsa:128553"/>
<dbReference type="MANE-Select" id="ENST00000371497.10">
    <property type="protein sequence ID" value="ENSP00000360552.3"/>
    <property type="RefSeq nucleotide sequence ID" value="NM_173485.6"/>
    <property type="RefSeq protein sequence ID" value="NP_775756.3"/>
</dbReference>
<dbReference type="UCSC" id="uc002xwo.3">
    <molecule id="Q9NRE2-1"/>
    <property type="organism name" value="human"/>
</dbReference>
<dbReference type="AGR" id="HGNC:13010"/>
<dbReference type="CTD" id="128553"/>
<dbReference type="DisGeNET" id="128553"/>
<dbReference type="GeneCards" id="TSHZ2"/>
<dbReference type="HGNC" id="HGNC:13010">
    <property type="gene designation" value="TSHZ2"/>
</dbReference>
<dbReference type="HPA" id="ENSG00000182463">
    <property type="expression patterns" value="Low tissue specificity"/>
</dbReference>
<dbReference type="MIM" id="614118">
    <property type="type" value="gene"/>
</dbReference>
<dbReference type="neXtProt" id="NX_Q9NRE2"/>
<dbReference type="OpenTargets" id="ENSG00000182463"/>
<dbReference type="PharmGKB" id="PA37589"/>
<dbReference type="VEuPathDB" id="HostDB:ENSG00000182463"/>
<dbReference type="eggNOG" id="ENOG502QV71">
    <property type="taxonomic scope" value="Eukaryota"/>
</dbReference>
<dbReference type="GeneTree" id="ENSGT00950000183051"/>
<dbReference type="HOGENOM" id="CLU_010469_0_0_1"/>
<dbReference type="InParanoid" id="Q9NRE2"/>
<dbReference type="OMA" id="TGHYQDN"/>
<dbReference type="OrthoDB" id="5815793at2759"/>
<dbReference type="PAN-GO" id="Q9NRE2">
    <property type="GO annotations" value="4 GO annotations based on evolutionary models"/>
</dbReference>
<dbReference type="PhylomeDB" id="Q9NRE2"/>
<dbReference type="TreeFam" id="TF328447"/>
<dbReference type="PathwayCommons" id="Q9NRE2"/>
<dbReference type="SignaLink" id="Q9NRE2"/>
<dbReference type="BioGRID-ORCS" id="128553">
    <property type="hits" value="13 hits in 1155 CRISPR screens"/>
</dbReference>
<dbReference type="ChiTaRS" id="TSHZ2">
    <property type="organism name" value="human"/>
</dbReference>
<dbReference type="GenomeRNAi" id="128553"/>
<dbReference type="Pharos" id="Q9NRE2">
    <property type="development level" value="Tbio"/>
</dbReference>
<dbReference type="PRO" id="PR:Q9NRE2"/>
<dbReference type="Proteomes" id="UP000005640">
    <property type="component" value="Chromosome 20"/>
</dbReference>
<dbReference type="RNAct" id="Q9NRE2">
    <property type="molecule type" value="protein"/>
</dbReference>
<dbReference type="Bgee" id="ENSG00000182463">
    <property type="expression patterns" value="Expressed in buccal mucosa cell and 167 other cell types or tissues"/>
</dbReference>
<dbReference type="ExpressionAtlas" id="Q9NRE2">
    <property type="expression patterns" value="baseline and differential"/>
</dbReference>
<dbReference type="GO" id="GO:0000785">
    <property type="term" value="C:chromatin"/>
    <property type="evidence" value="ECO:0000247"/>
    <property type="project" value="NTNU_SB"/>
</dbReference>
<dbReference type="GO" id="GO:0005634">
    <property type="term" value="C:nucleus"/>
    <property type="evidence" value="ECO:0000318"/>
    <property type="project" value="GO_Central"/>
</dbReference>
<dbReference type="GO" id="GO:0003677">
    <property type="term" value="F:DNA binding"/>
    <property type="evidence" value="ECO:0000318"/>
    <property type="project" value="GO_Central"/>
</dbReference>
<dbReference type="GO" id="GO:0000981">
    <property type="term" value="F:DNA-binding transcription factor activity, RNA polymerase II-specific"/>
    <property type="evidence" value="ECO:0000247"/>
    <property type="project" value="NTNU_SB"/>
</dbReference>
<dbReference type="GO" id="GO:0008270">
    <property type="term" value="F:zinc ion binding"/>
    <property type="evidence" value="ECO:0007669"/>
    <property type="project" value="UniProtKB-KW"/>
</dbReference>
<dbReference type="GO" id="GO:0006357">
    <property type="term" value="P:regulation of transcription by RNA polymerase II"/>
    <property type="evidence" value="ECO:0000318"/>
    <property type="project" value="GO_Central"/>
</dbReference>
<dbReference type="CDD" id="cd00086">
    <property type="entry name" value="homeodomain"/>
    <property type="match status" value="1"/>
</dbReference>
<dbReference type="Gene3D" id="3.30.160.60">
    <property type="entry name" value="Classic Zinc Finger"/>
    <property type="match status" value="2"/>
</dbReference>
<dbReference type="InterPro" id="IPR001356">
    <property type="entry name" value="HD"/>
</dbReference>
<dbReference type="InterPro" id="IPR027008">
    <property type="entry name" value="Teashirt_fam"/>
</dbReference>
<dbReference type="InterPro" id="IPR013087">
    <property type="entry name" value="Znf_C2H2_type"/>
</dbReference>
<dbReference type="PANTHER" id="PTHR12487:SF3">
    <property type="entry name" value="TEASHIRT HOMOLOG 2"/>
    <property type="match status" value="1"/>
</dbReference>
<dbReference type="PANTHER" id="PTHR12487">
    <property type="entry name" value="TEASHIRT-RELATED"/>
    <property type="match status" value="1"/>
</dbReference>
<dbReference type="SMART" id="SM00389">
    <property type="entry name" value="HOX"/>
    <property type="match status" value="1"/>
</dbReference>
<dbReference type="SMART" id="SM00355">
    <property type="entry name" value="ZnF_C2H2"/>
    <property type="match status" value="5"/>
</dbReference>
<dbReference type="PROSITE" id="PS00028">
    <property type="entry name" value="ZINC_FINGER_C2H2_1"/>
    <property type="match status" value="4"/>
</dbReference>
<dbReference type="PROSITE" id="PS50157">
    <property type="entry name" value="ZINC_FINGER_C2H2_2"/>
    <property type="match status" value="3"/>
</dbReference>
<name>TSH2_HUMAN</name>
<sequence length="1034" mass="115005">MPRRKQQAPKRAAGYAQEEQLKEEEEIKEEEEEEDSGSVAQLQGGNDTGTDEELETGPEQKGCFSYQNSPGSHLSNQDAENESLLSDASDQVSDIKSVCGRDASDKKAHTHVRLPNEAHNCMDKMTAVYANILSDSYWSGLGLGFKLSNSERRNCDTRNGSNKSDFDWHQDALSKSLQQNLPSRSVSKPSLFSSVQLYRQSSKMCGTVFTGASRFRCRQCSAAYDTLVELTVHMNETGHYQDDNRKKDKLRPTSYSKPRKRAFQDMDKEDAQKVLKCMFCGDSFDSLQDLSVHMIKTKHYQKVPLKEPVPTISSKMVTPAKKRVFDVNRPCSPDSTTGSFADSFSSQKNANLQLSSNNRYGYQNGASYTWQFEACKSQILKCMECGSSHDTLQQLTTHMMVTGHFLKVTSSASKKGKQLVLDPLAVEKMQSLSEAPNSDSLAPKPSSNSASDCTASTTELKKESKKERPEETSKDEKVVKSEDYEDPLQKPLDPTIKYQYLREEDLEDGSKGGGDILKSLENTVTTAINKAQNGAPSWSAYPSIHAAYQLSEGTKPPLPMGSQVLQIRPNLTNKLRPIAPKWKVMPLVSMPTHLAPYTQVKKESEDKDEAVKECGKESPHEEASSFSHSEGDSFRKSETPPEAKKTELGPLKEEEKLMKEGSEKEKPQPLEPTSALSNGCALANHAPALPCINPLSALQSVLNNHLGKATEPLRSPSCSSPSSSTISMFHKSNLNVMDKPVLSPASTRSASVSRRYLFENSDQPIDLTKSKSKKAESSQAQSCMSPPQKHALSDIADMVKVLPKATTPKPASSSRVPPMKLEMDVRRFEDVSSEVSTLHKRKGRQSNWNPQHLLILQAQFASSLFQTSEGKYLLSDLGPQERMQISKFTGLSMTTISHWLANVKYQLRKTGGTKFLKNMDKGHPIFYCSDCASQFRTPSTYISHLESHLGFQMKDMTRLSVDQQSKVEQEISRVSSAQRSPETIAAEEDTDSKFKCKLCCRTFVSKHAVKLHLSKTHSKSPEHHSQFVTDVDEE</sequence>
<evidence type="ECO:0000250" key="1"/>
<evidence type="ECO:0000250" key="2">
    <source>
        <dbReference type="UniProtKB" id="Q68FE9"/>
    </source>
</evidence>
<evidence type="ECO:0000255" key="3"/>
<evidence type="ECO:0000255" key="4">
    <source>
        <dbReference type="PROSITE-ProRule" id="PRU00042"/>
    </source>
</evidence>
<evidence type="ECO:0000256" key="5">
    <source>
        <dbReference type="SAM" id="MobiDB-lite"/>
    </source>
</evidence>
<evidence type="ECO:0000269" key="6">
    <source>
    </source>
</evidence>
<evidence type="ECO:0000269" key="7">
    <source>
    </source>
</evidence>
<evidence type="ECO:0000269" key="8">
    <source>
    </source>
</evidence>
<evidence type="ECO:0000269" key="9">
    <source>
    </source>
</evidence>
<evidence type="ECO:0000303" key="10">
    <source>
    </source>
</evidence>
<evidence type="ECO:0000305" key="11"/>
<evidence type="ECO:0007744" key="12">
    <source>
    </source>
</evidence>
<evidence type="ECO:0007744" key="13">
    <source>
    </source>
</evidence>
<organism>
    <name type="scientific">Homo sapiens</name>
    <name type="common">Human</name>
    <dbReference type="NCBI Taxonomy" id="9606"/>
    <lineage>
        <taxon>Eukaryota</taxon>
        <taxon>Metazoa</taxon>
        <taxon>Chordata</taxon>
        <taxon>Craniata</taxon>
        <taxon>Vertebrata</taxon>
        <taxon>Euteleostomi</taxon>
        <taxon>Mammalia</taxon>
        <taxon>Eutheria</taxon>
        <taxon>Euarchontoglires</taxon>
        <taxon>Primates</taxon>
        <taxon>Haplorrhini</taxon>
        <taxon>Catarrhini</taxon>
        <taxon>Hominidae</taxon>
        <taxon>Homo</taxon>
    </lineage>
</organism>
<gene>
    <name type="primary">TSHZ2</name>
    <name type="synonym">C20orf17</name>
    <name type="synonym">TSH2</name>
    <name type="synonym">ZNF218</name>
</gene>
<protein>
    <recommendedName>
        <fullName>Teashirt homolog 2</fullName>
    </recommendedName>
    <alternativeName>
        <fullName>Ovarian cancer-related protein 10-2</fullName>
        <shortName>OVC10-2</shortName>
    </alternativeName>
    <alternativeName>
        <fullName>Zinc finger protein 218</fullName>
    </alternativeName>
</protein>
<keyword id="KW-0025">Alternative splicing</keyword>
<keyword id="KW-0175">Coiled coil</keyword>
<keyword id="KW-0217">Developmental protein</keyword>
<keyword id="KW-0238">DNA-binding</keyword>
<keyword id="KW-0371">Homeobox</keyword>
<keyword id="KW-1017">Isopeptide bond</keyword>
<keyword id="KW-0479">Metal-binding</keyword>
<keyword id="KW-0539">Nucleus</keyword>
<keyword id="KW-0597">Phosphoprotein</keyword>
<keyword id="KW-1267">Proteomics identification</keyword>
<keyword id="KW-1185">Reference proteome</keyword>
<keyword id="KW-0677">Repeat</keyword>
<keyword id="KW-0678">Repressor</keyword>
<keyword id="KW-0804">Transcription</keyword>
<keyword id="KW-0805">Transcription regulation</keyword>
<keyword id="KW-0832">Ubl conjugation</keyword>
<keyword id="KW-0862">Zinc</keyword>
<keyword id="KW-0863">Zinc-finger</keyword>